<name>TXE02_LYCSI</name>
<organism>
    <name type="scientific">Lycosa singoriensis</name>
    <name type="common">Wolf spider</name>
    <name type="synonym">Aranea singoriensis</name>
    <dbReference type="NCBI Taxonomy" id="434756"/>
    <lineage>
        <taxon>Eukaryota</taxon>
        <taxon>Metazoa</taxon>
        <taxon>Ecdysozoa</taxon>
        <taxon>Arthropoda</taxon>
        <taxon>Chelicerata</taxon>
        <taxon>Arachnida</taxon>
        <taxon>Araneae</taxon>
        <taxon>Araneomorphae</taxon>
        <taxon>Entelegynae</taxon>
        <taxon>Lycosoidea</taxon>
        <taxon>Lycosidae</taxon>
        <taxon>Lycosa</taxon>
    </lineage>
</organism>
<evidence type="ECO:0000250" key="1"/>
<evidence type="ECO:0000255" key="2"/>
<evidence type="ECO:0000305" key="3"/>
<keyword id="KW-0044">Antibiotic</keyword>
<keyword id="KW-0929">Antimicrobial</keyword>
<keyword id="KW-1015">Disulfide bond</keyword>
<keyword id="KW-0964">Secreted</keyword>
<keyword id="KW-0732">Signal</keyword>
<keyword id="KW-0800">Toxin</keyword>
<sequence length="87" mass="9581">MNSKVFAALLLLALSTCVLSEKYCPTPRNTSCKKMNIRNNCCRDSDCTSNAFCCAEPCGNFCHKASDKPGGRRVDPNASCQTGYVYW</sequence>
<comment type="function">
    <text evidence="1">Has antibacterial activity.</text>
</comment>
<comment type="subcellular location">
    <subcellularLocation>
        <location evidence="1">Secreted</location>
    </subcellularLocation>
</comment>
<comment type="tissue specificity">
    <text>Expressed by the venom gland.</text>
</comment>
<comment type="PTM">
    <text evidence="3">Contains 5 disulfide bonds.</text>
</comment>
<comment type="similarity">
    <text evidence="3">Belongs to the venom protein 11 family. 01 (wap-1) subfamily.</text>
</comment>
<feature type="signal peptide" evidence="2">
    <location>
        <begin position="1"/>
        <end position="20"/>
    </location>
</feature>
<feature type="chain" id="PRO_0000401878" description="U14-lycotoxin-Ls1a">
    <location>
        <begin position="21"/>
        <end position="87"/>
    </location>
</feature>
<feature type="domain" description="WAP">
    <location>
        <begin position="21"/>
        <end position="66"/>
    </location>
</feature>
<feature type="disulfide bond" evidence="1">
    <location>
        <begin position="24"/>
        <end position="54"/>
    </location>
</feature>
<feature type="disulfide bond" evidence="1">
    <location>
        <begin position="32"/>
        <end position="58"/>
    </location>
</feature>
<feature type="disulfide bond" evidence="1">
    <location>
        <begin position="41"/>
        <end position="53"/>
    </location>
</feature>
<feature type="disulfide bond" evidence="3">
    <location>
        <begin position="42"/>
        <end position="80"/>
    </location>
</feature>
<feature type="disulfide bond" evidence="1">
    <location>
        <begin position="47"/>
        <end position="62"/>
    </location>
</feature>
<accession>B6DD35</accession>
<proteinExistence type="evidence at transcript level"/>
<protein>
    <recommendedName>
        <fullName>U14-lycotoxin-Ls1a</fullName>
    </recommendedName>
    <alternativeName>
        <fullName>Toxin-like structure LSTX-N2</fullName>
    </alternativeName>
</protein>
<dbReference type="EMBL" id="EU926119">
    <property type="protein sequence ID" value="ACI41451.1"/>
    <property type="molecule type" value="mRNA"/>
</dbReference>
<dbReference type="EMBL" id="FM864123">
    <property type="protein sequence ID" value="CAS03720.1"/>
    <property type="molecule type" value="mRNA"/>
</dbReference>
<dbReference type="SMR" id="B6DD35"/>
<dbReference type="ArachnoServer" id="AS001057">
    <property type="toxin name" value="U14-lycotoxin-Ls1a"/>
</dbReference>
<dbReference type="GO" id="GO:0005576">
    <property type="term" value="C:extracellular region"/>
    <property type="evidence" value="ECO:0007669"/>
    <property type="project" value="UniProtKB-SubCell"/>
</dbReference>
<dbReference type="GO" id="GO:0090729">
    <property type="term" value="F:toxin activity"/>
    <property type="evidence" value="ECO:0007669"/>
    <property type="project" value="UniProtKB-KW"/>
</dbReference>
<dbReference type="GO" id="GO:0042742">
    <property type="term" value="P:defense response to bacterium"/>
    <property type="evidence" value="ECO:0007669"/>
    <property type="project" value="UniProtKB-KW"/>
</dbReference>
<dbReference type="InterPro" id="IPR036645">
    <property type="entry name" value="Elafin-like_sf"/>
</dbReference>
<dbReference type="SUPFAM" id="SSF57256">
    <property type="entry name" value="Elafin-like"/>
    <property type="match status" value="1"/>
</dbReference>
<reference key="1">
    <citation type="journal article" date="2010" name="Zoology">
        <title>Transcriptome analysis of the venom glands of the Chinese wolf spider Lycosa singoriensis.</title>
        <authorList>
            <person name="Zhang Y."/>
            <person name="Chen J."/>
            <person name="Tang X."/>
            <person name="Wang F."/>
            <person name="Jiang L."/>
            <person name="Xiong X."/>
            <person name="Wang M."/>
            <person name="Rong M."/>
            <person name="Liu Z."/>
            <person name="Liang S."/>
        </authorList>
    </citation>
    <scope>NUCLEOTIDE SEQUENCE [LARGE SCALE MRNA]</scope>
    <source>
        <tissue>Venom gland</tissue>
    </source>
</reference>